<sequence>MSGCPYFQRKFLSTSKQHLKEEENDEAQTGINKASKGGLIYGDYLQLDKIVTSQVLQSELKGNKIHDEHLFIVTHQAYELWFKQVLWELDSVREIFISGHVRDERNMLKVNTRIHRIVMIFRLLLDQFAVLETMTALDFYDFREYLSPASGFQSLQFRLLENKIGVPHNQRVPYNRRHYRDNFRDQESELLLHSEQEPTLLQLVEQWLERTPGLEEDGFNFWGKLEKNIFEGLRREKEHIEQKPASERKEEMLAELIKQRDIFLSLFDEKRHDHLVSTGQRRLSYKALQGALMIYFYREEPRFQVPFQLLTSLMDIDTLMTKWRYNHVCMVHRMIGSKDGTGGSSGYQYLRSTVSDRYKVFVDLFNLATFLIPRDWVPKLDPSEHTFLYMAECCDSSYCSSSDDSD</sequence>
<proteinExistence type="evidence at transcript level"/>
<dbReference type="EC" id="1.13.11.11" evidence="1"/>
<dbReference type="EMBL" id="BC150376">
    <property type="protein sequence ID" value="AAI50377.1"/>
    <property type="molecule type" value="mRNA"/>
</dbReference>
<dbReference type="EMBL" id="BC151920">
    <property type="protein sequence ID" value="AAI51921.1"/>
    <property type="molecule type" value="mRNA"/>
</dbReference>
<dbReference type="RefSeq" id="NP_001096086.1">
    <property type="nucleotide sequence ID" value="NM_001102616.2"/>
</dbReference>
<dbReference type="SMR" id="A7MBU6"/>
<dbReference type="FunCoup" id="A7MBU6">
    <property type="interactions" value="425"/>
</dbReference>
<dbReference type="STRING" id="7955.ENSDARP00000096367"/>
<dbReference type="PaxDb" id="7955-ENSDARP00000096367"/>
<dbReference type="PeptideAtlas" id="A7MBU6"/>
<dbReference type="Ensembl" id="ENSDART00000105590">
    <property type="protein sequence ID" value="ENSDARP00000096367"/>
    <property type="gene ID" value="ENSDARG00000071429"/>
</dbReference>
<dbReference type="Ensembl" id="ENSDART00000186059">
    <property type="protein sequence ID" value="ENSDARP00000157202"/>
    <property type="gene ID" value="ENSDARG00000109773"/>
</dbReference>
<dbReference type="GeneID" id="100008541"/>
<dbReference type="KEGG" id="dre:100008541"/>
<dbReference type="AGR" id="ZFIN:ZDB-GENE-030131-1187"/>
<dbReference type="CTD" id="100008541"/>
<dbReference type="ZFIN" id="ZDB-GENE-030131-1187">
    <property type="gene designation" value="tdo2a"/>
</dbReference>
<dbReference type="eggNOG" id="KOG3906">
    <property type="taxonomic scope" value="Eukaryota"/>
</dbReference>
<dbReference type="HOGENOM" id="CLU_045599_1_1_1"/>
<dbReference type="InParanoid" id="A7MBU6"/>
<dbReference type="OMA" id="FITIHQT"/>
<dbReference type="OrthoDB" id="447477at2759"/>
<dbReference type="PhylomeDB" id="A7MBU6"/>
<dbReference type="TreeFam" id="TF105827"/>
<dbReference type="Reactome" id="R-DRE-71240">
    <property type="pathway name" value="Tryptophan catabolism"/>
</dbReference>
<dbReference type="UniPathway" id="UPA00333">
    <property type="reaction ID" value="UER00453"/>
</dbReference>
<dbReference type="PRO" id="PR:A7MBU6"/>
<dbReference type="Proteomes" id="UP000000437">
    <property type="component" value="Alternate scaffold 14"/>
</dbReference>
<dbReference type="Proteomes" id="UP000000437">
    <property type="component" value="Chromosome 14"/>
</dbReference>
<dbReference type="Bgee" id="ENSDARG00000071429">
    <property type="expression patterns" value="Expressed in liver and 15 other cell types or tissues"/>
</dbReference>
<dbReference type="ExpressionAtlas" id="A7MBU6">
    <property type="expression patterns" value="baseline and differential"/>
</dbReference>
<dbReference type="GO" id="GO:0020037">
    <property type="term" value="F:heme binding"/>
    <property type="evidence" value="ECO:0000250"/>
    <property type="project" value="UniProtKB"/>
</dbReference>
<dbReference type="GO" id="GO:0046872">
    <property type="term" value="F:metal ion binding"/>
    <property type="evidence" value="ECO:0007669"/>
    <property type="project" value="UniProtKB-KW"/>
</dbReference>
<dbReference type="GO" id="GO:0004833">
    <property type="term" value="F:tryptophan 2,3-dioxygenase activity"/>
    <property type="evidence" value="ECO:0000250"/>
    <property type="project" value="UniProtKB"/>
</dbReference>
<dbReference type="GO" id="GO:0019442">
    <property type="term" value="P:L-tryptophan catabolic process to acetyl-CoA"/>
    <property type="evidence" value="ECO:0000318"/>
    <property type="project" value="GO_Central"/>
</dbReference>
<dbReference type="GO" id="GO:0019441">
    <property type="term" value="P:L-tryptophan catabolic process to kynurenine"/>
    <property type="evidence" value="ECO:0000250"/>
    <property type="project" value="UniProtKB"/>
</dbReference>
<dbReference type="GO" id="GO:0051289">
    <property type="term" value="P:protein homotetramerization"/>
    <property type="evidence" value="ECO:0000250"/>
    <property type="project" value="UniProtKB"/>
</dbReference>
<dbReference type="FunFam" id="1.10.287.3810:FF:000001">
    <property type="entry name" value="Tryptophan 2,3-dioxygenase"/>
    <property type="match status" value="1"/>
</dbReference>
<dbReference type="Gene3D" id="1.10.287.3810">
    <property type="match status" value="1"/>
</dbReference>
<dbReference type="Gene3D" id="1.20.58.480">
    <property type="match status" value="1"/>
</dbReference>
<dbReference type="HAMAP" id="MF_01972">
    <property type="entry name" value="T23O"/>
    <property type="match status" value="1"/>
</dbReference>
<dbReference type="InterPro" id="IPR037217">
    <property type="entry name" value="Trp/Indoleamine_2_3_dOase-like"/>
</dbReference>
<dbReference type="InterPro" id="IPR004981">
    <property type="entry name" value="Trp_2_3_dOase"/>
</dbReference>
<dbReference type="PANTHER" id="PTHR10138">
    <property type="entry name" value="TRYPTOPHAN 2,3-DIOXYGENASE"/>
    <property type="match status" value="1"/>
</dbReference>
<dbReference type="PANTHER" id="PTHR10138:SF2">
    <property type="entry name" value="TRYPTOPHAN 2,3-DIOXYGENASE A"/>
    <property type="match status" value="1"/>
</dbReference>
<dbReference type="Pfam" id="PF03301">
    <property type="entry name" value="Trp_dioxygenase"/>
    <property type="match status" value="1"/>
</dbReference>
<dbReference type="SUPFAM" id="SSF140959">
    <property type="entry name" value="Indolic compounds 2,3-dioxygenase-like"/>
    <property type="match status" value="1"/>
</dbReference>
<keyword id="KW-0223">Dioxygenase</keyword>
<keyword id="KW-0349">Heme</keyword>
<keyword id="KW-0408">Iron</keyword>
<keyword id="KW-0479">Metal-binding</keyword>
<keyword id="KW-0560">Oxidoreductase</keyword>
<keyword id="KW-1185">Reference proteome</keyword>
<keyword id="KW-0823">Tryptophan catabolism</keyword>
<gene>
    <name evidence="1" type="primary">tdo2a</name>
    <name type="synonym">tdo2</name>
</gene>
<reference key="1">
    <citation type="submission" date="2007-08" db="EMBL/GenBank/DDBJ databases">
        <authorList>
            <consortium name="NIH - Zebrafish Gene Collection (ZGC) project"/>
        </authorList>
    </citation>
    <scope>NUCLEOTIDE SEQUENCE [LARGE SCALE MRNA]</scope>
    <source>
        <tissue>Intestine</tissue>
    </source>
</reference>
<name>T23OA_DANRE</name>
<evidence type="ECO:0000255" key="1">
    <source>
        <dbReference type="HAMAP-Rule" id="MF_03020"/>
    </source>
</evidence>
<evidence type="ECO:0000305" key="2"/>
<organism>
    <name type="scientific">Danio rerio</name>
    <name type="common">Zebrafish</name>
    <name type="synonym">Brachydanio rerio</name>
    <dbReference type="NCBI Taxonomy" id="7955"/>
    <lineage>
        <taxon>Eukaryota</taxon>
        <taxon>Metazoa</taxon>
        <taxon>Chordata</taxon>
        <taxon>Craniata</taxon>
        <taxon>Vertebrata</taxon>
        <taxon>Euteleostomi</taxon>
        <taxon>Actinopterygii</taxon>
        <taxon>Neopterygii</taxon>
        <taxon>Teleostei</taxon>
        <taxon>Ostariophysi</taxon>
        <taxon>Cypriniformes</taxon>
        <taxon>Danionidae</taxon>
        <taxon>Danioninae</taxon>
        <taxon>Danio</taxon>
    </lineage>
</organism>
<accession>A7MBU6</accession>
<accession>A7E2J5</accession>
<feature type="chain" id="PRO_0000360075" description="Tryptophan 2,3-dioxygenase A">
    <location>
        <begin position="1"/>
        <end position="406"/>
    </location>
</feature>
<feature type="binding site" evidence="1">
    <location>
        <begin position="71"/>
        <end position="75"/>
    </location>
    <ligand>
        <name>substrate</name>
    </ligand>
</feature>
<feature type="binding site" evidence="1">
    <location>
        <position position="143"/>
    </location>
    <ligand>
        <name>substrate</name>
    </ligand>
</feature>
<feature type="binding site" description="axial binding residue" evidence="1">
    <location>
        <position position="327"/>
    </location>
    <ligand>
        <name>heme</name>
        <dbReference type="ChEBI" id="CHEBI:30413"/>
    </ligand>
    <ligandPart>
        <name>Fe</name>
        <dbReference type="ChEBI" id="CHEBI:18248"/>
    </ligandPart>
</feature>
<feature type="binding site" evidence="1">
    <location>
        <position position="341"/>
    </location>
    <ligand>
        <name>substrate</name>
    </ligand>
</feature>
<feature type="sequence conflict" description="In Ref. 1; AAI50377." evidence="2" ref="1">
    <original>E</original>
    <variation>G</variation>
    <location>
        <position position="144"/>
    </location>
</feature>
<feature type="sequence conflict" description="In Ref. 1; AAI50377." evidence="2" ref="1">
    <original>S</original>
    <variation>R</variation>
    <location>
        <position position="337"/>
    </location>
</feature>
<feature type="sequence conflict" description="In Ref. 1; AAI51921." evidence="2" ref="1">
    <original>S</original>
    <variation>T</variation>
    <location>
        <position position="401"/>
    </location>
</feature>
<protein>
    <recommendedName>
        <fullName evidence="1">Tryptophan 2,3-dioxygenase A</fullName>
        <shortName evidence="1">TDO-A</shortName>
        <ecNumber evidence="1">1.13.11.11</ecNumber>
    </recommendedName>
    <alternativeName>
        <fullName evidence="1">Tryptamin 2,3-dioxygenase A</fullName>
    </alternativeName>
    <alternativeName>
        <fullName evidence="1">Tryptophan oxygenase A</fullName>
        <shortName evidence="1">TO-A</shortName>
        <shortName evidence="1">TRPO-A</shortName>
    </alternativeName>
    <alternativeName>
        <fullName evidence="1">Tryptophan pyrrolase A</fullName>
    </alternativeName>
    <alternativeName>
        <fullName evidence="1">Tryptophanase A</fullName>
    </alternativeName>
</protein>
<comment type="function">
    <text evidence="1">Heme-dependent dioxygenase that catalyzes the oxidative cleavage of the L-tryptophan (L-Trp) pyrrole ring and converts L-tryptophan to N-formyl-L-kynurenine. Catalyzes the oxidative cleavage of the indole moiety.</text>
</comment>
<comment type="catalytic activity">
    <reaction evidence="1">
        <text>L-tryptophan + O2 = N-formyl-L-kynurenine</text>
        <dbReference type="Rhea" id="RHEA:24536"/>
        <dbReference type="ChEBI" id="CHEBI:15379"/>
        <dbReference type="ChEBI" id="CHEBI:57912"/>
        <dbReference type="ChEBI" id="CHEBI:58629"/>
        <dbReference type="EC" id="1.13.11.11"/>
    </reaction>
</comment>
<comment type="cofactor">
    <cofactor evidence="1">
        <name>heme</name>
        <dbReference type="ChEBI" id="CHEBI:30413"/>
    </cofactor>
    <text evidence="1">Binds 1 heme group per subunit.</text>
</comment>
<comment type="pathway">
    <text evidence="1">Amino-acid degradation; L-tryptophan degradation via kynurenine pathway; L-kynurenine from L-tryptophan: step 1/2.</text>
</comment>
<comment type="subunit">
    <text evidence="1">Homotetramer. Dimer of dimers.</text>
</comment>
<comment type="similarity">
    <text evidence="1">Belongs to the tryptophan 2,3-dioxygenase family.</text>
</comment>